<keyword id="KW-0165">Cleavage on pair of basic residues</keyword>
<keyword id="KW-0175">Coiled coil</keyword>
<keyword id="KW-1015">Disulfide bond</keyword>
<keyword id="KW-1169">Fusion of virus membrane with host cell membrane</keyword>
<keyword id="KW-1168">Fusion of virus membrane with host membrane</keyword>
<keyword id="KW-0325">Glycoprotein</keyword>
<keyword id="KW-1032">Host cell membrane</keyword>
<keyword id="KW-1043">Host membrane</keyword>
<keyword id="KW-0472">Membrane</keyword>
<keyword id="KW-0732">Signal</keyword>
<keyword id="KW-0812">Transmembrane</keyword>
<keyword id="KW-1133">Transmembrane helix</keyword>
<keyword id="KW-0261">Viral envelope protein</keyword>
<keyword id="KW-1162">Viral penetration into host cytoplasm</keyword>
<keyword id="KW-0946">Virion</keyword>
<keyword id="KW-1160">Virus entry into host cell</keyword>
<sequence>MKAFSVTCLGFAVFSSSICVNINILQQIGYIKQQVRQLSYYSQSSSSYIVVKLLPNIQPTDNSCEFKSVTQYNKTLSNLLLPIAENINNIASPSPGSRRHKRFAGIAIGIAALGVATAAQVTAAVSLVQAQTNARAIAAMKNSIQATNRAIFEVKEGTQQLAIAVQAIQDHINTIMNTQLNNMSCQILDNQLATYLGLYLTELTTVFQPQLINPALSPISIQALRSLLGSMTPAVVQATLSTSISAAEILSAGLMEGQIVSVLLDEMQMIVKINIPTIVTQSNALVIDFYSISSFINNQESIIQLPDRILEIGNEQWSYPAKNCKLTRHHIFCQYNEAERLSLESKLCLAGNISACVFSPIAGSYMRRFVALDGTIVANCRSLTCLCKSPSYPIYQPDHHAVTTIDLTTCQTLSLDGLDFSIVSLSNITYAENLTISLSQTINTQPIDISTELSKVNASLQNAVKYIKESNHQLQSVSVNSKIGAIIVAALVLSILSIIISLLFCCWAYIATKEIRRINFKTNHINTISSSVDDLIRY</sequence>
<gene>
    <name type="primary">F</name>
</gene>
<reference key="1">
    <citation type="journal article" date="1987" name="Virology">
        <title>Cloning and sequencing of the mumps virus fusion protein gene.</title>
        <authorList>
            <person name="Waxham M.N."/>
            <person name="Server A.C."/>
            <person name="Goodman H.M."/>
            <person name="Wolinsky J.S."/>
        </authorList>
    </citation>
    <scope>NUCLEOTIDE SEQUENCE [GENOMIC RNA]</scope>
    <scope>N-TERMINUS</scope>
    <scope>CLEAVAGE BETWEEN F1 AND F2</scope>
</reference>
<reference key="2">
    <citation type="journal article" date="2022" name="Viruses">
        <title>Exploring the Mumps Virus Glycoproteins: A Review.</title>
        <authorList>
            <person name="Frost J.R."/>
            <person name="Shaikh S."/>
            <person name="Severini A."/>
        </authorList>
    </citation>
    <scope>REVIEW</scope>
</reference>
<dbReference type="EMBL" id="M17142">
    <property type="protein sequence ID" value="AAA46608.1"/>
    <property type="molecule type" value="Genomic_RNA"/>
</dbReference>
<dbReference type="PIR" id="A29124">
    <property type="entry name" value="VGNZMU"/>
</dbReference>
<dbReference type="SMR" id="P09458"/>
<dbReference type="GlyCosmos" id="P09458">
    <property type="glycosylation" value="6 sites, No reported glycans"/>
</dbReference>
<dbReference type="GO" id="GO:0020002">
    <property type="term" value="C:host cell plasma membrane"/>
    <property type="evidence" value="ECO:0007669"/>
    <property type="project" value="UniProtKB-SubCell"/>
</dbReference>
<dbReference type="GO" id="GO:0016020">
    <property type="term" value="C:membrane"/>
    <property type="evidence" value="ECO:0007669"/>
    <property type="project" value="UniProtKB-KW"/>
</dbReference>
<dbReference type="GO" id="GO:0019031">
    <property type="term" value="C:viral envelope"/>
    <property type="evidence" value="ECO:0007669"/>
    <property type="project" value="UniProtKB-KW"/>
</dbReference>
<dbReference type="GO" id="GO:0055036">
    <property type="term" value="C:virion membrane"/>
    <property type="evidence" value="ECO:0007669"/>
    <property type="project" value="UniProtKB-SubCell"/>
</dbReference>
<dbReference type="GO" id="GO:0019064">
    <property type="term" value="P:fusion of virus membrane with host plasma membrane"/>
    <property type="evidence" value="ECO:0007669"/>
    <property type="project" value="UniProtKB-KW"/>
</dbReference>
<dbReference type="GO" id="GO:0046718">
    <property type="term" value="P:symbiont entry into host cell"/>
    <property type="evidence" value="ECO:0007669"/>
    <property type="project" value="UniProtKB-KW"/>
</dbReference>
<dbReference type="Gene3D" id="1.10.287.2480">
    <property type="match status" value="1"/>
</dbReference>
<dbReference type="Gene3D" id="6.10.10.110">
    <property type="match status" value="1"/>
</dbReference>
<dbReference type="Gene3D" id="2.60.40.1690">
    <property type="entry name" value="Head and neck region of the ectodomain of NDV fusion glycoprotein"/>
    <property type="match status" value="1"/>
</dbReference>
<dbReference type="Gene3D" id="2.40.490.10">
    <property type="entry name" value="Newcastle disease virus like domain"/>
    <property type="match status" value="1"/>
</dbReference>
<dbReference type="Gene3D" id="1.10.287.770">
    <property type="entry name" value="YojJ-like"/>
    <property type="match status" value="1"/>
</dbReference>
<dbReference type="InterPro" id="IPR000776">
    <property type="entry name" value="Fusion_F0_Paramyxovir"/>
</dbReference>
<dbReference type="Pfam" id="PF00523">
    <property type="entry name" value="Fusion_gly"/>
    <property type="match status" value="1"/>
</dbReference>
<dbReference type="SUPFAM" id="SSF69922">
    <property type="entry name" value="Head and neck region of the ectodomain of NDV fusion glycoprotein"/>
    <property type="match status" value="1"/>
</dbReference>
<dbReference type="SUPFAM" id="SSF58069">
    <property type="entry name" value="Virus ectodomain"/>
    <property type="match status" value="1"/>
</dbReference>
<protein>
    <recommendedName>
        <fullName>Fusion glycoprotein F0</fullName>
    </recommendedName>
    <component>
        <recommendedName>
            <fullName>Fusion glycoprotein F2</fullName>
        </recommendedName>
    </component>
    <component>
        <recommendedName>
            <fullName>Fusion glycoprotein F1</fullName>
        </recommendedName>
    </component>
</protein>
<evidence type="ECO:0000250" key="1"/>
<evidence type="ECO:0000250" key="2">
    <source>
        <dbReference type="UniProtKB" id="P11236"/>
    </source>
</evidence>
<evidence type="ECO:0000250" key="3">
    <source>
        <dbReference type="UniProtKB" id="Q5SC53"/>
    </source>
</evidence>
<evidence type="ECO:0000250" key="4">
    <source>
        <dbReference type="UniProtKB" id="Q786F3"/>
    </source>
</evidence>
<evidence type="ECO:0000255" key="5"/>
<evidence type="ECO:0000269" key="6">
    <source>
    </source>
</evidence>
<evidence type="ECO:0000305" key="7"/>
<feature type="signal peptide" evidence="6">
    <location>
        <begin position="1"/>
        <end position="19"/>
    </location>
</feature>
<feature type="chain" id="PRO_0000039282" description="Fusion glycoprotein F0">
    <location>
        <begin position="20"/>
        <end position="538"/>
    </location>
</feature>
<feature type="chain" id="PRO_0000039283" description="Fusion glycoprotein F2">
    <location>
        <begin position="20"/>
        <end position="102"/>
    </location>
</feature>
<feature type="chain" id="PRO_0000039284" description="Fusion glycoprotein F1">
    <location>
        <begin position="103"/>
        <end position="538"/>
    </location>
</feature>
<feature type="topological domain" description="Extracellular" evidence="1">
    <location>
        <begin position="20"/>
        <end position="486"/>
    </location>
</feature>
<feature type="transmembrane region" description="Helical" evidence="5">
    <location>
        <begin position="487"/>
        <end position="507"/>
    </location>
</feature>
<feature type="topological domain" description="Cytoplasmic" evidence="1">
    <location>
        <begin position="508"/>
        <end position="538"/>
    </location>
</feature>
<feature type="region of interest" description="Fusion peptide" evidence="4">
    <location>
        <begin position="103"/>
        <end position="127"/>
    </location>
</feature>
<feature type="coiled-coil region" evidence="5">
    <location>
        <begin position="128"/>
        <end position="156"/>
    </location>
</feature>
<feature type="coiled-coil region" evidence="5">
    <location>
        <begin position="452"/>
        <end position="477"/>
    </location>
</feature>
<feature type="site" description="Determinant for fusogenicity and cleavage efficiency" evidence="3">
    <location>
        <position position="95"/>
    </location>
</feature>
<feature type="site" description="Cleavage; by host" evidence="3">
    <location>
        <begin position="102"/>
        <end position="103"/>
    </location>
</feature>
<feature type="glycosylation site" description="N-linked (GlcNAc...) asparagine; by host" evidence="4">
    <location>
        <position position="56"/>
    </location>
</feature>
<feature type="glycosylation site" description="N-linked (GlcNAc...) asparagine; by host" evidence="5">
    <location>
        <position position="73"/>
    </location>
</feature>
<feature type="glycosylation site" description="N-linked (GlcNAc...) asparagine; by host" evidence="5">
    <location>
        <position position="182"/>
    </location>
</feature>
<feature type="glycosylation site" description="N-linked (GlcNAc...) asparagine; by host" evidence="5">
    <location>
        <position position="352"/>
    </location>
</feature>
<feature type="glycosylation site" description="N-linked (GlcNAc...) asparagine; by host" evidence="5">
    <location>
        <position position="427"/>
    </location>
</feature>
<feature type="glycosylation site" description="N-linked (GlcNAc...) asparagine; by host" evidence="5">
    <location>
        <position position="433"/>
    </location>
</feature>
<feature type="glycosylation site" description="N-linked (GlcNAc...) asparagine; by host" evidence="5">
    <location>
        <position position="457"/>
    </location>
</feature>
<feature type="disulfide bond" description="Interchain (with C-195)" evidence="4">
    <location>
        <position position="64"/>
    </location>
</feature>
<feature type="disulfide bond" description="Interchain (with C-68)" evidence="4">
    <location>
        <position position="185"/>
    </location>
</feature>
<feature type="disulfide bond" evidence="4">
    <location>
        <begin position="324"/>
        <end position="333"/>
    </location>
</feature>
<feature type="disulfide bond" evidence="4">
    <location>
        <begin position="348"/>
        <end position="356"/>
    </location>
</feature>
<feature type="disulfide bond" evidence="4">
    <location>
        <begin position="380"/>
        <end position="385"/>
    </location>
</feature>
<feature type="disulfide bond" evidence="4">
    <location>
        <begin position="387"/>
        <end position="410"/>
    </location>
</feature>
<name>FUS_MUMPR</name>
<organism>
    <name type="scientific">Mumps virus (strain RW)</name>
    <name type="common">MuV</name>
    <dbReference type="NCBI Taxonomy" id="11172"/>
    <lineage>
        <taxon>Viruses</taxon>
        <taxon>Riboviria</taxon>
        <taxon>Orthornavirae</taxon>
        <taxon>Negarnaviricota</taxon>
        <taxon>Haploviricotina</taxon>
        <taxon>Monjiviricetes</taxon>
        <taxon>Mononegavirales</taxon>
        <taxon>Paramyxoviridae</taxon>
        <taxon>Rubulavirinae</taxon>
        <taxon>Orthorubulavirus</taxon>
        <taxon>Orthorubulavirus parotitidis</taxon>
        <taxon>Mumps orthorubulavirus</taxon>
    </lineage>
</organism>
<accession>P09458</accession>
<organismHost>
    <name type="scientific">Homo sapiens</name>
    <name type="common">Human</name>
    <dbReference type="NCBI Taxonomy" id="9606"/>
</organismHost>
<comment type="function">
    <text evidence="1">Class I viral fusion protein. Under the current model, the protein has at least 3 conformational states: pre-fusion native state, pre-hairpin intermediate state, and post-fusion hairpin state. During viral and plasma cell membrane fusion, the heptad repeat (HR) regions assume a trimer-of-hairpins structure, positioning the fusion peptide in close proximity to the C-terminal region of the ectodomain. The formation of this structure appears to drive apposition and subsequent fusion of viral and plasma cell membranes. Directs fusion of viral and cellular membranes leading to delivery of the nucleocapsid into the cytoplasm. This fusion is pH independent and occurs directly at the outer cell membrane. The trimer of F1-F2 (F protein) probably interacts with HN at the virion surface. Upon HN binding to its cellular receptor, the hydrophobic fusion peptide is unmasked and interacts with the cellular membrane, inducing the fusion between cell and virion membranes. Later in infection, F proteins expressed at the plasma membrane of infected cells could mediate fusion with adjacent cells to form syncytia, a cytopathic effect that could lead to tissue necrosis (By similarity).</text>
</comment>
<comment type="subunit">
    <text evidence="2">Homotrimer; disulfide-linked F1-F2 (By similarity). Interacts with host LAMP1; LAMP2 and LAMP3; these interactions promote the cleavage of the viral fusion protein F (By similarity).</text>
</comment>
<comment type="subcellular location">
    <subcellularLocation>
        <location evidence="1">Virion membrane</location>
        <topology evidence="1">Single-pass type I membrane protein</topology>
    </subcellularLocation>
    <subcellularLocation>
        <location evidence="1">Host cell membrane</location>
        <topology evidence="1">Single-pass membrane protein</topology>
    </subcellularLocation>
</comment>
<comment type="domain">
    <text evidence="2">The 2 coiled coil regions form a stable six-helix bundle.</text>
</comment>
<comment type="PTM">
    <text evidence="3 6">The inactive precursor F0 is glycosylated and proteolytically cleaved into F1 and F2 to be functionally active (PubMed:3617503). The cleavage is mediated by cellular proteases including host FURIN during the transport and maturation of the polypeptide (By similarity).</text>
</comment>
<comment type="similarity">
    <text evidence="7">Belongs to the paramyxoviruses fusion glycoprotein family.</text>
</comment>
<proteinExistence type="evidence at protein level"/>